<sequence>MEFKIMSTTDKIEQKVIEMVAEKLNKDKSIITTDSRFIEDLKADSLDTVELMMAIEVEYGIDIPDDEATKIKTVSDVIQYIKERQS</sequence>
<organism>
    <name type="scientific">Rickettsia rickettsii (strain Iowa)</name>
    <dbReference type="NCBI Taxonomy" id="452659"/>
    <lineage>
        <taxon>Bacteria</taxon>
        <taxon>Pseudomonadati</taxon>
        <taxon>Pseudomonadota</taxon>
        <taxon>Alphaproteobacteria</taxon>
        <taxon>Rickettsiales</taxon>
        <taxon>Rickettsiaceae</taxon>
        <taxon>Rickettsieae</taxon>
        <taxon>Rickettsia</taxon>
        <taxon>spotted fever group</taxon>
    </lineage>
</organism>
<comment type="function">
    <text evidence="1">Carrier of the growing fatty acid chain in fatty acid biosynthesis.</text>
</comment>
<comment type="pathway">
    <text evidence="1">Lipid metabolism; fatty acid biosynthesis.</text>
</comment>
<comment type="subcellular location">
    <subcellularLocation>
        <location evidence="1">Cytoplasm</location>
    </subcellularLocation>
</comment>
<comment type="PTM">
    <text evidence="1">4'-phosphopantetheine is transferred from CoA to a specific serine of apo-ACP by AcpS. This modification is essential for activity because fatty acids are bound in thioester linkage to the sulfhydryl of the prosthetic group.</text>
</comment>
<comment type="similarity">
    <text evidence="1">Belongs to the acyl carrier protein (ACP) family.</text>
</comment>
<accession>B0BV67</accession>
<keyword id="KW-0963">Cytoplasm</keyword>
<keyword id="KW-0275">Fatty acid biosynthesis</keyword>
<keyword id="KW-0276">Fatty acid metabolism</keyword>
<keyword id="KW-0444">Lipid biosynthesis</keyword>
<keyword id="KW-0443">Lipid metabolism</keyword>
<keyword id="KW-0596">Phosphopantetheine</keyword>
<keyword id="KW-0597">Phosphoprotein</keyword>
<dbReference type="EMBL" id="CP000766">
    <property type="protein sequence ID" value="ABY73127.1"/>
    <property type="molecule type" value="Genomic_DNA"/>
</dbReference>
<dbReference type="BMRB" id="B0BV67"/>
<dbReference type="SMR" id="B0BV67"/>
<dbReference type="KEGG" id="rrj:RrIowa_1393"/>
<dbReference type="eggNOG" id="COG0236">
    <property type="taxonomic scope" value="Bacteria"/>
</dbReference>
<dbReference type="HOGENOM" id="CLU_108696_5_6_5"/>
<dbReference type="UniPathway" id="UPA00094"/>
<dbReference type="Proteomes" id="UP000000796">
    <property type="component" value="Chromosome"/>
</dbReference>
<dbReference type="GO" id="GO:0005829">
    <property type="term" value="C:cytosol"/>
    <property type="evidence" value="ECO:0007669"/>
    <property type="project" value="TreeGrafter"/>
</dbReference>
<dbReference type="GO" id="GO:0016020">
    <property type="term" value="C:membrane"/>
    <property type="evidence" value="ECO:0007669"/>
    <property type="project" value="GOC"/>
</dbReference>
<dbReference type="GO" id="GO:0000035">
    <property type="term" value="F:acyl binding"/>
    <property type="evidence" value="ECO:0007669"/>
    <property type="project" value="TreeGrafter"/>
</dbReference>
<dbReference type="GO" id="GO:0000036">
    <property type="term" value="F:acyl carrier activity"/>
    <property type="evidence" value="ECO:0007669"/>
    <property type="project" value="UniProtKB-UniRule"/>
</dbReference>
<dbReference type="GO" id="GO:0009245">
    <property type="term" value="P:lipid A biosynthetic process"/>
    <property type="evidence" value="ECO:0007669"/>
    <property type="project" value="TreeGrafter"/>
</dbReference>
<dbReference type="Gene3D" id="1.10.1200.10">
    <property type="entry name" value="ACP-like"/>
    <property type="match status" value="1"/>
</dbReference>
<dbReference type="HAMAP" id="MF_01217">
    <property type="entry name" value="Acyl_carrier"/>
    <property type="match status" value="1"/>
</dbReference>
<dbReference type="InterPro" id="IPR003231">
    <property type="entry name" value="ACP"/>
</dbReference>
<dbReference type="InterPro" id="IPR036736">
    <property type="entry name" value="ACP-like_sf"/>
</dbReference>
<dbReference type="InterPro" id="IPR009081">
    <property type="entry name" value="PP-bd_ACP"/>
</dbReference>
<dbReference type="NCBIfam" id="TIGR00517">
    <property type="entry name" value="acyl_carrier"/>
    <property type="match status" value="1"/>
</dbReference>
<dbReference type="NCBIfam" id="NF002148">
    <property type="entry name" value="PRK00982.1-2"/>
    <property type="match status" value="1"/>
</dbReference>
<dbReference type="NCBIfam" id="NF002150">
    <property type="entry name" value="PRK00982.1-4"/>
    <property type="match status" value="1"/>
</dbReference>
<dbReference type="PANTHER" id="PTHR20863">
    <property type="entry name" value="ACYL CARRIER PROTEIN"/>
    <property type="match status" value="1"/>
</dbReference>
<dbReference type="PANTHER" id="PTHR20863:SF76">
    <property type="entry name" value="CARRIER DOMAIN-CONTAINING PROTEIN"/>
    <property type="match status" value="1"/>
</dbReference>
<dbReference type="Pfam" id="PF00550">
    <property type="entry name" value="PP-binding"/>
    <property type="match status" value="1"/>
</dbReference>
<dbReference type="SUPFAM" id="SSF47336">
    <property type="entry name" value="ACP-like"/>
    <property type="match status" value="1"/>
</dbReference>
<dbReference type="PROSITE" id="PS50075">
    <property type="entry name" value="CARRIER"/>
    <property type="match status" value="1"/>
</dbReference>
<name>ACP_RICRO</name>
<gene>
    <name evidence="1" type="primary">acpP</name>
    <name type="ordered locus">RrIowa_1393</name>
</gene>
<evidence type="ECO:0000255" key="1">
    <source>
        <dbReference type="HAMAP-Rule" id="MF_01217"/>
    </source>
</evidence>
<evidence type="ECO:0000255" key="2">
    <source>
        <dbReference type="PROSITE-ProRule" id="PRU00258"/>
    </source>
</evidence>
<protein>
    <recommendedName>
        <fullName evidence="1">Acyl carrier protein</fullName>
        <shortName evidence="1">ACP</shortName>
    </recommendedName>
</protein>
<proteinExistence type="inferred from homology"/>
<reference key="1">
    <citation type="journal article" date="2008" name="Infect. Immun.">
        <title>Genomic comparison of virulent Rickettsia rickettsii Sheila Smith and avirulent Rickettsia rickettsii Iowa.</title>
        <authorList>
            <person name="Ellison D.W."/>
            <person name="Clark T.R."/>
            <person name="Sturdevant D.E."/>
            <person name="Virtaneva K."/>
            <person name="Porcella S.F."/>
            <person name="Hackstadt T."/>
        </authorList>
    </citation>
    <scope>NUCLEOTIDE SEQUENCE [LARGE SCALE GENOMIC DNA]</scope>
    <source>
        <strain>Iowa</strain>
    </source>
</reference>
<feature type="chain" id="PRO_1000085610" description="Acyl carrier protein">
    <location>
        <begin position="1"/>
        <end position="86"/>
    </location>
</feature>
<feature type="domain" description="Carrier" evidence="2">
    <location>
        <begin position="10"/>
        <end position="85"/>
    </location>
</feature>
<feature type="modified residue" description="O-(pantetheine 4'-phosphoryl)serine" evidence="2">
    <location>
        <position position="45"/>
    </location>
</feature>